<accession>Q32GM0</accession>
<organism>
    <name type="scientific">Shigella dysenteriae serotype 1 (strain Sd197)</name>
    <dbReference type="NCBI Taxonomy" id="300267"/>
    <lineage>
        <taxon>Bacteria</taxon>
        <taxon>Pseudomonadati</taxon>
        <taxon>Pseudomonadota</taxon>
        <taxon>Gammaproteobacteria</taxon>
        <taxon>Enterobacterales</taxon>
        <taxon>Enterobacteriaceae</taxon>
        <taxon>Shigella</taxon>
    </lineage>
</organism>
<protein>
    <recommendedName>
        <fullName>Shiga toxin subunit B</fullName>
    </recommendedName>
</protein>
<comment type="function">
    <text evidence="1">The B subunit is responsible for the binding of the holotoxin to specific receptors on the target cell surface, such as globotriaosylceramide (Gb3) in human intestinal microvilli.</text>
</comment>
<comment type="subunit">
    <text evidence="1">Shiga toxin contains a single subunit A and five copies of subunit B.</text>
</comment>
<comment type="domain">
    <text evidence="1">There are three Gb3-binding sites in each subunit B monomer, allowing for a tighter binding to the target cell. Binding sites 1 and 2 have higher binding affinities than site 3 (By similarity).</text>
</comment>
<comment type="similarity">
    <text evidence="3">Belongs to the StxB family.</text>
</comment>
<keyword id="KW-1015">Disulfide bond</keyword>
<keyword id="KW-1185">Reference proteome</keyword>
<keyword id="KW-0732">Signal</keyword>
<keyword id="KW-0800">Toxin</keyword>
<keyword id="KW-0843">Virulence</keyword>
<gene>
    <name type="primary">stxB</name>
    <name type="ordered locus">SDY_1390</name>
</gene>
<reference key="1">
    <citation type="journal article" date="2005" name="Nucleic Acids Res.">
        <title>Genome dynamics and diversity of Shigella species, the etiologic agents of bacillary dysentery.</title>
        <authorList>
            <person name="Yang F."/>
            <person name="Yang J."/>
            <person name="Zhang X."/>
            <person name="Chen L."/>
            <person name="Jiang Y."/>
            <person name="Yan Y."/>
            <person name="Tang X."/>
            <person name="Wang J."/>
            <person name="Xiong Z."/>
            <person name="Dong J."/>
            <person name="Xue Y."/>
            <person name="Zhu Y."/>
            <person name="Xu X."/>
            <person name="Sun L."/>
            <person name="Chen S."/>
            <person name="Nie H."/>
            <person name="Peng J."/>
            <person name="Xu J."/>
            <person name="Wang Y."/>
            <person name="Yuan Z."/>
            <person name="Wen Y."/>
            <person name="Yao Z."/>
            <person name="Shen Y."/>
            <person name="Qiang B."/>
            <person name="Hou Y."/>
            <person name="Yu J."/>
            <person name="Jin Q."/>
        </authorList>
    </citation>
    <scope>NUCLEOTIDE SEQUENCE [LARGE SCALE GENOMIC DNA]</scope>
    <source>
        <strain>Sd197</strain>
    </source>
</reference>
<feature type="signal peptide" evidence="2">
    <location>
        <begin position="1"/>
        <end position="20"/>
    </location>
</feature>
<feature type="chain" id="PRO_0000312306" description="Shiga toxin subunit B">
    <location>
        <begin position="21"/>
        <end position="89"/>
    </location>
</feature>
<feature type="disulfide bond" evidence="1">
    <location>
        <begin position="24"/>
        <end position="77"/>
    </location>
</feature>
<sequence>MKKTLLIAASLSFFSASALATPDCVTGKVEYTKYNDDDTFTVKVGDKELFTNRWNLQSLLLSAQITGMTVTIKTNACHNGGGFSEVIFR</sequence>
<name>STXB_SHIDS</name>
<proteinExistence type="inferred from homology"/>
<evidence type="ECO:0000250" key="1"/>
<evidence type="ECO:0000255" key="2"/>
<evidence type="ECO:0000305" key="3"/>
<dbReference type="EMBL" id="CP000034">
    <property type="protein sequence ID" value="ABB61535.1"/>
    <property type="molecule type" value="Genomic_DNA"/>
</dbReference>
<dbReference type="RefSeq" id="YP_403026.1">
    <property type="nucleotide sequence ID" value="NC_007606.1"/>
</dbReference>
<dbReference type="SMR" id="Q32GM0"/>
<dbReference type="STRING" id="300267.SDY_1390"/>
<dbReference type="EnsemblBacteria" id="ABB61535">
    <property type="protein sequence ID" value="ABB61535"/>
    <property type="gene ID" value="SDY_1390"/>
</dbReference>
<dbReference type="KEGG" id="sdy:SDY_1390"/>
<dbReference type="PATRIC" id="fig|300267.13.peg.1651"/>
<dbReference type="HOGENOM" id="CLU_191376_0_0_6"/>
<dbReference type="Proteomes" id="UP000002716">
    <property type="component" value="Chromosome"/>
</dbReference>
<dbReference type="GO" id="GO:0005576">
    <property type="term" value="C:extracellular region"/>
    <property type="evidence" value="ECO:0007669"/>
    <property type="project" value="InterPro"/>
</dbReference>
<dbReference type="GO" id="GO:0044177">
    <property type="term" value="C:host cell Golgi apparatus"/>
    <property type="evidence" value="ECO:0000314"/>
    <property type="project" value="UniProtKB"/>
</dbReference>
<dbReference type="GO" id="GO:0090729">
    <property type="term" value="F:toxin activity"/>
    <property type="evidence" value="ECO:0007669"/>
    <property type="project" value="UniProtKB-KW"/>
</dbReference>
<dbReference type="GO" id="GO:0019836">
    <property type="term" value="P:symbiont-mediated hemolysis of host erythrocyte"/>
    <property type="evidence" value="ECO:0007669"/>
    <property type="project" value="InterPro"/>
</dbReference>
<dbReference type="FunFam" id="2.40.50.70:FF:000001">
    <property type="entry name" value="Shiga toxin 1 subunit B"/>
    <property type="match status" value="1"/>
</dbReference>
<dbReference type="Gene3D" id="2.40.50.70">
    <property type="match status" value="1"/>
</dbReference>
<dbReference type="InterPro" id="IPR008992">
    <property type="entry name" value="Enterotoxin"/>
</dbReference>
<dbReference type="InterPro" id="IPR003189">
    <property type="entry name" value="SLT_beta"/>
</dbReference>
<dbReference type="NCBIfam" id="NF041697">
    <property type="entry name" value="Shig_StxB_1a"/>
    <property type="match status" value="1"/>
</dbReference>
<dbReference type="NCBIfam" id="NF033659">
    <property type="entry name" value="Shiga_Stx1B"/>
    <property type="match status" value="1"/>
</dbReference>
<dbReference type="Pfam" id="PF02258">
    <property type="entry name" value="SLT_beta"/>
    <property type="match status" value="1"/>
</dbReference>
<dbReference type="SUPFAM" id="SSF50203">
    <property type="entry name" value="Bacterial enterotoxins"/>
    <property type="match status" value="1"/>
</dbReference>